<feature type="chain" id="PRO_1000007044" description="Large ribosomal subunit protein bL12">
    <location>
        <begin position="1"/>
        <end position="123"/>
    </location>
</feature>
<reference key="1">
    <citation type="journal article" date="2007" name="PLoS Genet.">
        <title>Meningococcal genetic variation mechanisms viewed through comparative analysis of serogroup C strain FAM18.</title>
        <authorList>
            <person name="Bentley S.D."/>
            <person name="Vernikos G.S."/>
            <person name="Snyder L.A.S."/>
            <person name="Churcher C."/>
            <person name="Arrowsmith C."/>
            <person name="Chillingworth T."/>
            <person name="Cronin A."/>
            <person name="Davis P.H."/>
            <person name="Holroyd N.E."/>
            <person name="Jagels K."/>
            <person name="Maddison M."/>
            <person name="Moule S."/>
            <person name="Rabbinowitsch E."/>
            <person name="Sharp S."/>
            <person name="Unwin L."/>
            <person name="Whitehead S."/>
            <person name="Quail M.A."/>
            <person name="Achtman M."/>
            <person name="Barrell B.G."/>
            <person name="Saunders N.J."/>
            <person name="Parkhill J."/>
        </authorList>
    </citation>
    <scope>NUCLEOTIDE SEQUENCE [LARGE SCALE GENOMIC DNA]</scope>
    <source>
        <strain>ATCC 700532 / DSM 15464 / FAM18</strain>
    </source>
</reference>
<keyword id="KW-0687">Ribonucleoprotein</keyword>
<keyword id="KW-0689">Ribosomal protein</keyword>
<comment type="function">
    <text evidence="1">Forms part of the ribosomal stalk which helps the ribosome interact with GTP-bound translation factors. Is thus essential for accurate translation.</text>
</comment>
<comment type="subunit">
    <text evidence="1">Homodimer. Part of the ribosomal stalk of the 50S ribosomal subunit. Forms a multimeric L10(L12)X complex, where L10 forms an elongated spine to which 2 to 4 L12 dimers bind in a sequential fashion. Binds GTP-bound translation factors.</text>
</comment>
<comment type="similarity">
    <text evidence="1">Belongs to the bacterial ribosomal protein bL12 family.</text>
</comment>
<name>RL7_NEIMF</name>
<accession>A1KRG5</accession>
<organism>
    <name type="scientific">Neisseria meningitidis serogroup C / serotype 2a (strain ATCC 700532 / DSM 15464 / FAM18)</name>
    <dbReference type="NCBI Taxonomy" id="272831"/>
    <lineage>
        <taxon>Bacteria</taxon>
        <taxon>Pseudomonadati</taxon>
        <taxon>Pseudomonadota</taxon>
        <taxon>Betaproteobacteria</taxon>
        <taxon>Neisseriales</taxon>
        <taxon>Neisseriaceae</taxon>
        <taxon>Neisseria</taxon>
    </lineage>
</organism>
<evidence type="ECO:0000255" key="1">
    <source>
        <dbReference type="HAMAP-Rule" id="MF_00368"/>
    </source>
</evidence>
<evidence type="ECO:0000305" key="2"/>
<dbReference type="EMBL" id="AM421808">
    <property type="protein sequence ID" value="CAM09441.1"/>
    <property type="molecule type" value="Genomic_DNA"/>
</dbReference>
<dbReference type="RefSeq" id="WP_002215374.1">
    <property type="nucleotide sequence ID" value="NC_008767.1"/>
</dbReference>
<dbReference type="SMR" id="A1KRG5"/>
<dbReference type="GeneID" id="93387206"/>
<dbReference type="KEGG" id="nmc:NMC0122"/>
<dbReference type="HOGENOM" id="CLU_086499_3_2_4"/>
<dbReference type="Proteomes" id="UP000002286">
    <property type="component" value="Chromosome"/>
</dbReference>
<dbReference type="GO" id="GO:0022625">
    <property type="term" value="C:cytosolic large ribosomal subunit"/>
    <property type="evidence" value="ECO:0007669"/>
    <property type="project" value="TreeGrafter"/>
</dbReference>
<dbReference type="GO" id="GO:0003729">
    <property type="term" value="F:mRNA binding"/>
    <property type="evidence" value="ECO:0007669"/>
    <property type="project" value="TreeGrafter"/>
</dbReference>
<dbReference type="GO" id="GO:0003735">
    <property type="term" value="F:structural constituent of ribosome"/>
    <property type="evidence" value="ECO:0007669"/>
    <property type="project" value="InterPro"/>
</dbReference>
<dbReference type="GO" id="GO:0006412">
    <property type="term" value="P:translation"/>
    <property type="evidence" value="ECO:0007669"/>
    <property type="project" value="UniProtKB-UniRule"/>
</dbReference>
<dbReference type="CDD" id="cd00387">
    <property type="entry name" value="Ribosomal_L7_L12"/>
    <property type="match status" value="1"/>
</dbReference>
<dbReference type="FunFam" id="1.20.5.710:FF:000003">
    <property type="entry name" value="50S ribosomal protein L7/L12"/>
    <property type="match status" value="1"/>
</dbReference>
<dbReference type="FunFam" id="3.30.1390.10:FF:000001">
    <property type="entry name" value="50S ribosomal protein L7/L12"/>
    <property type="match status" value="1"/>
</dbReference>
<dbReference type="Gene3D" id="3.30.1390.10">
    <property type="match status" value="1"/>
</dbReference>
<dbReference type="Gene3D" id="1.20.5.710">
    <property type="entry name" value="Single helix bin"/>
    <property type="match status" value="1"/>
</dbReference>
<dbReference type="HAMAP" id="MF_00368">
    <property type="entry name" value="Ribosomal_bL12"/>
    <property type="match status" value="1"/>
</dbReference>
<dbReference type="InterPro" id="IPR000206">
    <property type="entry name" value="Ribosomal_bL12"/>
</dbReference>
<dbReference type="InterPro" id="IPR013823">
    <property type="entry name" value="Ribosomal_bL12_C"/>
</dbReference>
<dbReference type="InterPro" id="IPR014719">
    <property type="entry name" value="Ribosomal_bL12_C/ClpS-like"/>
</dbReference>
<dbReference type="InterPro" id="IPR008932">
    <property type="entry name" value="Ribosomal_bL12_oligo"/>
</dbReference>
<dbReference type="InterPro" id="IPR036235">
    <property type="entry name" value="Ribosomal_bL12_oligo_N_sf"/>
</dbReference>
<dbReference type="NCBIfam" id="TIGR00855">
    <property type="entry name" value="L12"/>
    <property type="match status" value="1"/>
</dbReference>
<dbReference type="PANTHER" id="PTHR45987">
    <property type="entry name" value="39S RIBOSOMAL PROTEIN L12"/>
    <property type="match status" value="1"/>
</dbReference>
<dbReference type="PANTHER" id="PTHR45987:SF4">
    <property type="entry name" value="LARGE RIBOSOMAL SUBUNIT PROTEIN BL12M"/>
    <property type="match status" value="1"/>
</dbReference>
<dbReference type="Pfam" id="PF00542">
    <property type="entry name" value="Ribosomal_L12"/>
    <property type="match status" value="1"/>
</dbReference>
<dbReference type="Pfam" id="PF16320">
    <property type="entry name" value="Ribosomal_L12_N"/>
    <property type="match status" value="1"/>
</dbReference>
<dbReference type="SUPFAM" id="SSF54736">
    <property type="entry name" value="ClpS-like"/>
    <property type="match status" value="1"/>
</dbReference>
<dbReference type="SUPFAM" id="SSF48300">
    <property type="entry name" value="Ribosomal protein L7/12, oligomerisation (N-terminal) domain"/>
    <property type="match status" value="1"/>
</dbReference>
<gene>
    <name evidence="1" type="primary">rplL</name>
    <name type="ordered locus">NMC0122</name>
</gene>
<sequence>MAITKEDILEAVGSLTVMELNDLVKAFEEKFGVSAAAVAVAGPAGAGAADAEEKTEFDVVLASAGDQKVGVIKVVRAITGLGLKEAKDIVDGAPKTIKEGVSKAEAEDIQKQLEEAGAKVEIK</sequence>
<protein>
    <recommendedName>
        <fullName evidence="1">Large ribosomal subunit protein bL12</fullName>
    </recommendedName>
    <alternativeName>
        <fullName evidence="2">50S ribosomal protein L7/L12</fullName>
    </alternativeName>
</protein>
<proteinExistence type="inferred from homology"/>